<feature type="chain" id="PRO_1000016330" description="Histidine--tRNA ligase">
    <location>
        <begin position="1"/>
        <end position="446"/>
    </location>
</feature>
<organism>
    <name type="scientific">Burkholderia vietnamiensis (strain G4 / LMG 22486)</name>
    <name type="common">Burkholderia cepacia (strain R1808)</name>
    <dbReference type="NCBI Taxonomy" id="269482"/>
    <lineage>
        <taxon>Bacteria</taxon>
        <taxon>Pseudomonadati</taxon>
        <taxon>Pseudomonadota</taxon>
        <taxon>Betaproteobacteria</taxon>
        <taxon>Burkholderiales</taxon>
        <taxon>Burkholderiaceae</taxon>
        <taxon>Burkholderia</taxon>
        <taxon>Burkholderia cepacia complex</taxon>
    </lineage>
</organism>
<proteinExistence type="inferred from homology"/>
<keyword id="KW-0030">Aminoacyl-tRNA synthetase</keyword>
<keyword id="KW-0067">ATP-binding</keyword>
<keyword id="KW-0963">Cytoplasm</keyword>
<keyword id="KW-0436">Ligase</keyword>
<keyword id="KW-0547">Nucleotide-binding</keyword>
<keyword id="KW-0648">Protein biosynthesis</keyword>
<reference key="1">
    <citation type="submission" date="2007-03" db="EMBL/GenBank/DDBJ databases">
        <title>Complete sequence of chromosome 1 of Burkholderia vietnamiensis G4.</title>
        <authorList>
            <consortium name="US DOE Joint Genome Institute"/>
            <person name="Copeland A."/>
            <person name="Lucas S."/>
            <person name="Lapidus A."/>
            <person name="Barry K."/>
            <person name="Detter J.C."/>
            <person name="Glavina del Rio T."/>
            <person name="Hammon N."/>
            <person name="Israni S."/>
            <person name="Dalin E."/>
            <person name="Tice H."/>
            <person name="Pitluck S."/>
            <person name="Chain P."/>
            <person name="Malfatti S."/>
            <person name="Shin M."/>
            <person name="Vergez L."/>
            <person name="Schmutz J."/>
            <person name="Larimer F."/>
            <person name="Land M."/>
            <person name="Hauser L."/>
            <person name="Kyrpides N."/>
            <person name="Tiedje J."/>
            <person name="Richardson P."/>
        </authorList>
    </citation>
    <scope>NUCLEOTIDE SEQUENCE [LARGE SCALE GENOMIC DNA]</scope>
    <source>
        <strain>G4 / LMG 22486</strain>
    </source>
</reference>
<dbReference type="EC" id="6.1.1.21" evidence="1"/>
<dbReference type="EMBL" id="CP000614">
    <property type="protein sequence ID" value="ABO54742.1"/>
    <property type="molecule type" value="Genomic_DNA"/>
</dbReference>
<dbReference type="SMR" id="A4JEN9"/>
<dbReference type="KEGG" id="bvi:Bcep1808_1738"/>
<dbReference type="eggNOG" id="COG0124">
    <property type="taxonomic scope" value="Bacteria"/>
</dbReference>
<dbReference type="HOGENOM" id="CLU_025113_1_1_4"/>
<dbReference type="Proteomes" id="UP000002287">
    <property type="component" value="Chromosome 1"/>
</dbReference>
<dbReference type="GO" id="GO:0005737">
    <property type="term" value="C:cytoplasm"/>
    <property type="evidence" value="ECO:0007669"/>
    <property type="project" value="UniProtKB-SubCell"/>
</dbReference>
<dbReference type="GO" id="GO:0005524">
    <property type="term" value="F:ATP binding"/>
    <property type="evidence" value="ECO:0007669"/>
    <property type="project" value="UniProtKB-UniRule"/>
</dbReference>
<dbReference type="GO" id="GO:0004821">
    <property type="term" value="F:histidine-tRNA ligase activity"/>
    <property type="evidence" value="ECO:0007669"/>
    <property type="project" value="UniProtKB-UniRule"/>
</dbReference>
<dbReference type="GO" id="GO:0006427">
    <property type="term" value="P:histidyl-tRNA aminoacylation"/>
    <property type="evidence" value="ECO:0007669"/>
    <property type="project" value="UniProtKB-UniRule"/>
</dbReference>
<dbReference type="CDD" id="cd00773">
    <property type="entry name" value="HisRS-like_core"/>
    <property type="match status" value="1"/>
</dbReference>
<dbReference type="CDD" id="cd00859">
    <property type="entry name" value="HisRS_anticodon"/>
    <property type="match status" value="1"/>
</dbReference>
<dbReference type="FunFam" id="3.30.930.10:FF:000005">
    <property type="entry name" value="Histidine--tRNA ligase"/>
    <property type="match status" value="1"/>
</dbReference>
<dbReference type="Gene3D" id="3.40.50.800">
    <property type="entry name" value="Anticodon-binding domain"/>
    <property type="match status" value="1"/>
</dbReference>
<dbReference type="Gene3D" id="3.30.930.10">
    <property type="entry name" value="Bira Bifunctional Protein, Domain 2"/>
    <property type="match status" value="1"/>
</dbReference>
<dbReference type="HAMAP" id="MF_00127">
    <property type="entry name" value="His_tRNA_synth"/>
    <property type="match status" value="1"/>
</dbReference>
<dbReference type="InterPro" id="IPR006195">
    <property type="entry name" value="aa-tRNA-synth_II"/>
</dbReference>
<dbReference type="InterPro" id="IPR045864">
    <property type="entry name" value="aa-tRNA-synth_II/BPL/LPL"/>
</dbReference>
<dbReference type="InterPro" id="IPR004154">
    <property type="entry name" value="Anticodon-bd"/>
</dbReference>
<dbReference type="InterPro" id="IPR036621">
    <property type="entry name" value="Anticodon-bd_dom_sf"/>
</dbReference>
<dbReference type="InterPro" id="IPR015807">
    <property type="entry name" value="His-tRNA-ligase"/>
</dbReference>
<dbReference type="InterPro" id="IPR041715">
    <property type="entry name" value="HisRS-like_core"/>
</dbReference>
<dbReference type="InterPro" id="IPR004516">
    <property type="entry name" value="HisRS/HisZ"/>
</dbReference>
<dbReference type="InterPro" id="IPR033656">
    <property type="entry name" value="HisRS_anticodon"/>
</dbReference>
<dbReference type="NCBIfam" id="TIGR00442">
    <property type="entry name" value="hisS"/>
    <property type="match status" value="1"/>
</dbReference>
<dbReference type="PANTHER" id="PTHR43707:SF1">
    <property type="entry name" value="HISTIDINE--TRNA LIGASE, MITOCHONDRIAL-RELATED"/>
    <property type="match status" value="1"/>
</dbReference>
<dbReference type="PANTHER" id="PTHR43707">
    <property type="entry name" value="HISTIDYL-TRNA SYNTHETASE"/>
    <property type="match status" value="1"/>
</dbReference>
<dbReference type="Pfam" id="PF03129">
    <property type="entry name" value="HGTP_anticodon"/>
    <property type="match status" value="1"/>
</dbReference>
<dbReference type="Pfam" id="PF13393">
    <property type="entry name" value="tRNA-synt_His"/>
    <property type="match status" value="1"/>
</dbReference>
<dbReference type="PIRSF" id="PIRSF001549">
    <property type="entry name" value="His-tRNA_synth"/>
    <property type="match status" value="1"/>
</dbReference>
<dbReference type="SUPFAM" id="SSF52954">
    <property type="entry name" value="Class II aaRS ABD-related"/>
    <property type="match status" value="1"/>
</dbReference>
<dbReference type="SUPFAM" id="SSF55681">
    <property type="entry name" value="Class II aaRS and biotin synthetases"/>
    <property type="match status" value="1"/>
</dbReference>
<dbReference type="PROSITE" id="PS50862">
    <property type="entry name" value="AA_TRNA_LIGASE_II"/>
    <property type="match status" value="1"/>
</dbReference>
<protein>
    <recommendedName>
        <fullName evidence="1">Histidine--tRNA ligase</fullName>
        <ecNumber evidence="1">6.1.1.21</ecNumber>
    </recommendedName>
    <alternativeName>
        <fullName evidence="1">Histidyl-tRNA synthetase</fullName>
        <shortName evidence="1">HisRS</shortName>
    </alternativeName>
</protein>
<sequence length="446" mass="49554">MTEQKRKIEKLAGVKGMNDILPQDAGLWEFFEATVKSLLRAYGYQNIRTPIVEHTQLFTRGIGEVTDIVEKEMYSFTDALNGENLTMRPENTAAVVRAAIEHNMLYDGPKRLWYIGPMFRHERPQRGRYRQFHQVGVEALGFAGPDADAEIIMMCQRLWDDLGLTGIKLEINSLGLAEERAAHRVELIKYLEQHVDVLDEDAKRRLYTNPLRVLDTKNPALQEIAQNAPKLIDFLGDESRAHFEGLQRLLLANNIPFKINPRLVRGLDYYNLTVFEWVTDKLGAQGTVAAGGRYDPLIEQLGGKPTAACGWAMGIERILELLKEEDLAPEQEGVDVYVVHQGEAAREQAFIAAERLRDTGLDVIFHCSADGAPASFKSQMKRADASGAAFAVIFGEEEVANGTAGVKALRGAGQEGEKNVQQTVPVEGLTEFLINAMVASAEDGDD</sequence>
<comment type="catalytic activity">
    <reaction evidence="1">
        <text>tRNA(His) + L-histidine + ATP = L-histidyl-tRNA(His) + AMP + diphosphate + H(+)</text>
        <dbReference type="Rhea" id="RHEA:17313"/>
        <dbReference type="Rhea" id="RHEA-COMP:9665"/>
        <dbReference type="Rhea" id="RHEA-COMP:9689"/>
        <dbReference type="ChEBI" id="CHEBI:15378"/>
        <dbReference type="ChEBI" id="CHEBI:30616"/>
        <dbReference type="ChEBI" id="CHEBI:33019"/>
        <dbReference type="ChEBI" id="CHEBI:57595"/>
        <dbReference type="ChEBI" id="CHEBI:78442"/>
        <dbReference type="ChEBI" id="CHEBI:78527"/>
        <dbReference type="ChEBI" id="CHEBI:456215"/>
        <dbReference type="EC" id="6.1.1.21"/>
    </reaction>
</comment>
<comment type="subunit">
    <text evidence="1">Homodimer.</text>
</comment>
<comment type="subcellular location">
    <subcellularLocation>
        <location evidence="1">Cytoplasm</location>
    </subcellularLocation>
</comment>
<comment type="similarity">
    <text evidence="1">Belongs to the class-II aminoacyl-tRNA synthetase family.</text>
</comment>
<gene>
    <name evidence="1" type="primary">hisS</name>
    <name type="ordered locus">Bcep1808_1738</name>
</gene>
<name>SYH_BURVG</name>
<accession>A4JEN9</accession>
<evidence type="ECO:0000255" key="1">
    <source>
        <dbReference type="HAMAP-Rule" id="MF_00127"/>
    </source>
</evidence>